<keyword id="KW-0145">Chemotaxis</keyword>
<keyword id="KW-0378">Hydrolase</keyword>
<keyword id="KW-1185">Reference proteome</keyword>
<comment type="function">
    <text evidence="1">Probably deamidates glutamine residues to glutamate on methyl-accepting chemotaxis receptors (MCPs), playing an important role in chemotaxis.</text>
</comment>
<comment type="catalytic activity">
    <reaction evidence="1">
        <text>L-glutaminyl-[protein] + H2O = L-glutamyl-[protein] + NH4(+)</text>
        <dbReference type="Rhea" id="RHEA:16441"/>
        <dbReference type="Rhea" id="RHEA-COMP:10207"/>
        <dbReference type="Rhea" id="RHEA-COMP:10208"/>
        <dbReference type="ChEBI" id="CHEBI:15377"/>
        <dbReference type="ChEBI" id="CHEBI:28938"/>
        <dbReference type="ChEBI" id="CHEBI:29973"/>
        <dbReference type="ChEBI" id="CHEBI:30011"/>
        <dbReference type="EC" id="3.5.1.44"/>
    </reaction>
</comment>
<comment type="similarity">
    <text evidence="1">Belongs to the CheD family.</text>
</comment>
<name>CHED_LARHH</name>
<evidence type="ECO:0000255" key="1">
    <source>
        <dbReference type="HAMAP-Rule" id="MF_01440"/>
    </source>
</evidence>
<accession>C1DCE3</accession>
<reference key="1">
    <citation type="journal article" date="2009" name="PLoS Genet.">
        <title>The complete genome and proteome of Laribacter hongkongensis reveal potential mechanisms for adaptations to different temperatures and habitats.</title>
        <authorList>
            <person name="Woo P.C.Y."/>
            <person name="Lau S.K.P."/>
            <person name="Tse H."/>
            <person name="Teng J.L.L."/>
            <person name="Curreem S.O."/>
            <person name="Tsang A.K.L."/>
            <person name="Fan R.Y.Y."/>
            <person name="Wong G.K.M."/>
            <person name="Huang Y."/>
            <person name="Loman N.J."/>
            <person name="Snyder L.A.S."/>
            <person name="Cai J.J."/>
            <person name="Huang J.-D."/>
            <person name="Mak W."/>
            <person name="Pallen M.J."/>
            <person name="Lok S."/>
            <person name="Yuen K.-Y."/>
        </authorList>
    </citation>
    <scope>NUCLEOTIDE SEQUENCE [LARGE SCALE GENOMIC DNA]</scope>
    <source>
        <strain>HLHK9</strain>
    </source>
</reference>
<protein>
    <recommendedName>
        <fullName evidence="1">Probable chemoreceptor glutamine deamidase CheD</fullName>
        <ecNumber evidence="1">3.5.1.44</ecNumber>
    </recommendedName>
</protein>
<proteinExistence type="inferred from homology"/>
<sequence>MTIGNTKQTSAAAPKPTYFDHNFKLEATKVLPGEYVATNRDMLLVTVLGSCVSCCLRDSAANVSGLNHFMLPDALMDSEAAATMPARYGMHAMEILINEMIKLGADRQRMEAKIFGGGNVLKGILKSNIGERNVDFVRQYLAKEGIPVMAEDVLDSYPRKLYFFSRSGRVLVKKIKEVHNRTIFERELSYRERLRRMPLDGSIELF</sequence>
<dbReference type="EC" id="3.5.1.44" evidence="1"/>
<dbReference type="EMBL" id="CP001154">
    <property type="protein sequence ID" value="ACO73560.1"/>
    <property type="molecule type" value="Genomic_DNA"/>
</dbReference>
<dbReference type="RefSeq" id="WP_012696052.1">
    <property type="nucleotide sequence ID" value="NC_012559.1"/>
</dbReference>
<dbReference type="SMR" id="C1DCE3"/>
<dbReference type="STRING" id="557598.LHK_00567"/>
<dbReference type="GeneID" id="75108912"/>
<dbReference type="KEGG" id="lhk:LHK_00567"/>
<dbReference type="eggNOG" id="COG1871">
    <property type="taxonomic scope" value="Bacteria"/>
</dbReference>
<dbReference type="HOGENOM" id="CLU_087854_0_0_4"/>
<dbReference type="Proteomes" id="UP000002010">
    <property type="component" value="Chromosome"/>
</dbReference>
<dbReference type="GO" id="GO:0050568">
    <property type="term" value="F:protein-glutamine glutaminase activity"/>
    <property type="evidence" value="ECO:0007669"/>
    <property type="project" value="UniProtKB-UniRule"/>
</dbReference>
<dbReference type="GO" id="GO:0006935">
    <property type="term" value="P:chemotaxis"/>
    <property type="evidence" value="ECO:0007669"/>
    <property type="project" value="UniProtKB-UniRule"/>
</dbReference>
<dbReference type="CDD" id="cd16352">
    <property type="entry name" value="CheD"/>
    <property type="match status" value="1"/>
</dbReference>
<dbReference type="Gene3D" id="3.30.1330.200">
    <property type="match status" value="1"/>
</dbReference>
<dbReference type="HAMAP" id="MF_01440">
    <property type="entry name" value="CheD"/>
    <property type="match status" value="1"/>
</dbReference>
<dbReference type="InterPro" id="IPR038592">
    <property type="entry name" value="CheD-like_sf"/>
</dbReference>
<dbReference type="InterPro" id="IPR005659">
    <property type="entry name" value="Chemorcpt_Glu_NH3ase_CheD"/>
</dbReference>
<dbReference type="InterPro" id="IPR011324">
    <property type="entry name" value="Cytotoxic_necrot_fac-like_cat"/>
</dbReference>
<dbReference type="NCBIfam" id="NF010013">
    <property type="entry name" value="PRK13487.1"/>
    <property type="match status" value="1"/>
</dbReference>
<dbReference type="PANTHER" id="PTHR35147">
    <property type="entry name" value="CHEMORECEPTOR GLUTAMINE DEAMIDASE CHED-RELATED"/>
    <property type="match status" value="1"/>
</dbReference>
<dbReference type="PANTHER" id="PTHR35147:SF2">
    <property type="entry name" value="CHEMORECEPTOR GLUTAMINE DEAMIDASE CHED-RELATED"/>
    <property type="match status" value="1"/>
</dbReference>
<dbReference type="Pfam" id="PF03975">
    <property type="entry name" value="CheD"/>
    <property type="match status" value="1"/>
</dbReference>
<dbReference type="SUPFAM" id="SSF64438">
    <property type="entry name" value="CNF1/YfiH-like putative cysteine hydrolases"/>
    <property type="match status" value="1"/>
</dbReference>
<organism>
    <name type="scientific">Laribacter hongkongensis (strain HLHK9)</name>
    <dbReference type="NCBI Taxonomy" id="557598"/>
    <lineage>
        <taxon>Bacteria</taxon>
        <taxon>Pseudomonadati</taxon>
        <taxon>Pseudomonadota</taxon>
        <taxon>Betaproteobacteria</taxon>
        <taxon>Neisseriales</taxon>
        <taxon>Aquaspirillaceae</taxon>
        <taxon>Laribacter</taxon>
    </lineage>
</organism>
<feature type="chain" id="PRO_1000184927" description="Probable chemoreceptor glutamine deamidase CheD">
    <location>
        <begin position="1"/>
        <end position="206"/>
    </location>
</feature>
<gene>
    <name evidence="1" type="primary">cheD</name>
    <name type="ordered locus">LHK_00567</name>
</gene>